<proteinExistence type="evidence at transcript level"/>
<organism>
    <name type="scientific">Gallus gallus</name>
    <name type="common">Chicken</name>
    <dbReference type="NCBI Taxonomy" id="9031"/>
    <lineage>
        <taxon>Eukaryota</taxon>
        <taxon>Metazoa</taxon>
        <taxon>Chordata</taxon>
        <taxon>Craniata</taxon>
        <taxon>Vertebrata</taxon>
        <taxon>Euteleostomi</taxon>
        <taxon>Archelosauria</taxon>
        <taxon>Archosauria</taxon>
        <taxon>Dinosauria</taxon>
        <taxon>Saurischia</taxon>
        <taxon>Theropoda</taxon>
        <taxon>Coelurosauria</taxon>
        <taxon>Aves</taxon>
        <taxon>Neognathae</taxon>
        <taxon>Galloanserae</taxon>
        <taxon>Galliformes</taxon>
        <taxon>Phasianidae</taxon>
        <taxon>Phasianinae</taxon>
        <taxon>Gallus</taxon>
    </lineage>
</organism>
<keyword id="KW-0256">Endoplasmic reticulum</keyword>
<keyword id="KW-0325">Glycoprotein</keyword>
<keyword id="KW-0489">Methyltransferase</keyword>
<keyword id="KW-0496">Mitochondrion</keyword>
<keyword id="KW-1185">Reference proteome</keyword>
<keyword id="KW-0732">Signal</keyword>
<keyword id="KW-0808">Transferase</keyword>
<gene>
    <name evidence="1" type="primary">METTL9</name>
    <name evidence="3" type="ORF">RCJMB04_2a9</name>
</gene>
<feature type="signal peptide" evidence="2">
    <location>
        <begin position="1"/>
        <end position="24"/>
    </location>
</feature>
<feature type="chain" id="PRO_0000317492" description="Protein-L-histidine N-pros-methyltransferase">
    <location>
        <begin position="25"/>
        <end position="321"/>
    </location>
</feature>
<feature type="binding site" evidence="1">
    <location>
        <position position="177"/>
    </location>
    <ligand>
        <name>S-adenosyl-L-homocysteine</name>
        <dbReference type="ChEBI" id="CHEBI:57856"/>
    </ligand>
</feature>
<feature type="binding site" evidence="1">
    <location>
        <position position="213"/>
    </location>
    <ligand>
        <name>S-adenosyl-L-homocysteine</name>
        <dbReference type="ChEBI" id="CHEBI:57856"/>
    </ligand>
</feature>
<feature type="binding site" evidence="1">
    <location>
        <position position="298"/>
    </location>
    <ligand>
        <name>S-adenosyl-L-homocysteine</name>
        <dbReference type="ChEBI" id="CHEBI:57856"/>
    </ligand>
</feature>
<feature type="glycosylation site" description="N-linked (GlcNAc...) asparagine" evidence="2">
    <location>
        <position position="89"/>
    </location>
</feature>
<comment type="function">
    <text evidence="1">Protein-histidine N-methyltransferase that specifically catalyzes 1-methylhistidine (pros-methylhistidine) methylation of target proteins (By similarity). Mediates methylation of proteins with a His-x-His (HxH) motif (where 'x' is preferably a small amino acid); 1-methylhistidine modification may affect the binding of zinc and other metals to its target proteins (By similarity).</text>
</comment>
<comment type="catalytic activity">
    <reaction evidence="1">
        <text>L-histidyl-[protein] + S-adenosyl-L-methionine = N(pros)-methyl-L-histidyl-[protein] + S-adenosyl-L-homocysteine + H(+)</text>
        <dbReference type="Rhea" id="RHEA:67076"/>
        <dbReference type="Rhea" id="RHEA-COMP:9745"/>
        <dbReference type="Rhea" id="RHEA-COMP:17184"/>
        <dbReference type="ChEBI" id="CHEBI:15378"/>
        <dbReference type="ChEBI" id="CHEBI:29979"/>
        <dbReference type="ChEBI" id="CHEBI:43903"/>
        <dbReference type="ChEBI" id="CHEBI:57856"/>
        <dbReference type="ChEBI" id="CHEBI:59789"/>
    </reaction>
    <physiologicalReaction direction="left-to-right" evidence="1">
        <dbReference type="Rhea" id="RHEA:67077"/>
    </physiologicalReaction>
</comment>
<comment type="subcellular location">
    <subcellularLocation>
        <location evidence="1">Endoplasmic reticulum</location>
    </subcellularLocation>
    <subcellularLocation>
        <location evidence="1">Mitochondrion</location>
    </subcellularLocation>
    <text evidence="1">Colocalizes with membranous compartments such as the endoplasmic reticulum and mitochondria.</text>
</comment>
<comment type="similarity">
    <text evidence="4">Belongs to the METTL9 family.</text>
</comment>
<name>METL9_CHICK</name>
<reference key="1">
    <citation type="journal article" date="2005" name="Genome Biol.">
        <title>Full-length cDNAs from chicken bursal lymphocytes to facilitate gene function analysis.</title>
        <authorList>
            <person name="Caldwell R.B."/>
            <person name="Kierzek A.M."/>
            <person name="Arakawa H."/>
            <person name="Bezzubov Y."/>
            <person name="Zaim J."/>
            <person name="Fiedler P."/>
            <person name="Kutter S."/>
            <person name="Blagodatski A."/>
            <person name="Kostovska D."/>
            <person name="Koter M."/>
            <person name="Plachy J."/>
            <person name="Carninci P."/>
            <person name="Hayashizaki Y."/>
            <person name="Buerstedde J.-M."/>
        </authorList>
    </citation>
    <scope>NUCLEOTIDE SEQUENCE [LARGE SCALE MRNA]</scope>
    <source>
        <strain>CB</strain>
        <tissue>Bursa of Fabricius</tissue>
    </source>
</reference>
<sequence>MRLWLCWLGCYTLLLWALRRRMWAGPARYLRSPLSRSLYANMMGSHGPPAPGAGENHQWYVCNTEQLSESLQPIFVQSYLDQGTQIFLNNSIEKSGWLFIQLYHSFVSSIFSLFMSRTSINGLLGRGSMFVFSPEQFQRLLKINPEWKSHRLLDLGAGDGEVTKVMSPHFEEIYATELSETMIWQLQKKKYRVLGINEWQNTGFQYDVISCLNLLDRCDQPLTVLKDTRSVLEPTRGRVILALVLPFHPYVENVGGKWEKPSEVLEIKGHTWEEQVNSLPEVFGKAGFAIEAFTRLPYLCEGDMYNDYYVLDDAVFVLKPV</sequence>
<protein>
    <recommendedName>
        <fullName>Protein-L-histidine N-pros-methyltransferase</fullName>
        <ecNumber evidence="1">2.1.1.-</ecNumber>
    </recommendedName>
    <alternativeName>
        <fullName evidence="1">Methyltransferase-like protein 9</fullName>
    </alternativeName>
</protein>
<accession>Q5ZMH6</accession>
<evidence type="ECO:0000250" key="1">
    <source>
        <dbReference type="UniProtKB" id="Q9H1A3"/>
    </source>
</evidence>
<evidence type="ECO:0000255" key="2"/>
<evidence type="ECO:0000303" key="3">
    <source>
    </source>
</evidence>
<evidence type="ECO:0000305" key="4"/>
<dbReference type="EC" id="2.1.1.-" evidence="1"/>
<dbReference type="EMBL" id="AJ719408">
    <property type="protein sequence ID" value="CAG31067.1"/>
    <property type="molecule type" value="mRNA"/>
</dbReference>
<dbReference type="RefSeq" id="NP_001006172.1">
    <property type="nucleotide sequence ID" value="NM_001006172.1"/>
</dbReference>
<dbReference type="SMR" id="Q5ZMH6"/>
<dbReference type="FunCoup" id="Q5ZMH6">
    <property type="interactions" value="1874"/>
</dbReference>
<dbReference type="STRING" id="9031.ENSGALP00000011398"/>
<dbReference type="GlyCosmos" id="Q5ZMH6">
    <property type="glycosylation" value="1 site, No reported glycans"/>
</dbReference>
<dbReference type="GlyGen" id="Q5ZMH6">
    <property type="glycosylation" value="1 site"/>
</dbReference>
<dbReference type="PaxDb" id="9031-ENSGALP00000011398"/>
<dbReference type="GeneID" id="416623"/>
<dbReference type="KEGG" id="gga:416623"/>
<dbReference type="CTD" id="51108"/>
<dbReference type="VEuPathDB" id="HostDB:geneid_416623"/>
<dbReference type="eggNOG" id="KOG3987">
    <property type="taxonomic scope" value="Eukaryota"/>
</dbReference>
<dbReference type="InParanoid" id="Q5ZMH6"/>
<dbReference type="OrthoDB" id="199041at2759"/>
<dbReference type="PhylomeDB" id="Q5ZMH6"/>
<dbReference type="PRO" id="PR:Q5ZMH6"/>
<dbReference type="Proteomes" id="UP000000539">
    <property type="component" value="Unassembled WGS sequence"/>
</dbReference>
<dbReference type="GO" id="GO:0005783">
    <property type="term" value="C:endoplasmic reticulum"/>
    <property type="evidence" value="ECO:0000250"/>
    <property type="project" value="UniProtKB"/>
</dbReference>
<dbReference type="GO" id="GO:0005739">
    <property type="term" value="C:mitochondrion"/>
    <property type="evidence" value="ECO:0007669"/>
    <property type="project" value="UniProtKB-SubCell"/>
</dbReference>
<dbReference type="GO" id="GO:0106370">
    <property type="term" value="F:protein-L-histidine N-pros-methyltransferase activity"/>
    <property type="evidence" value="ECO:0000250"/>
    <property type="project" value="UniProtKB"/>
</dbReference>
<dbReference type="GO" id="GO:0032259">
    <property type="term" value="P:methylation"/>
    <property type="evidence" value="ECO:0007669"/>
    <property type="project" value="UniProtKB-KW"/>
</dbReference>
<dbReference type="CDD" id="cd02440">
    <property type="entry name" value="AdoMet_MTases"/>
    <property type="match status" value="1"/>
</dbReference>
<dbReference type="Gene3D" id="3.40.50.150">
    <property type="entry name" value="Vaccinia Virus protein VP39"/>
    <property type="match status" value="1"/>
</dbReference>
<dbReference type="InterPro" id="IPR007884">
    <property type="entry name" value="METL9"/>
</dbReference>
<dbReference type="InterPro" id="IPR029063">
    <property type="entry name" value="SAM-dependent_MTases_sf"/>
</dbReference>
<dbReference type="PANTHER" id="PTHR12890">
    <property type="entry name" value="DREV PROTEIN"/>
    <property type="match status" value="1"/>
</dbReference>
<dbReference type="PANTHER" id="PTHR12890:SF0">
    <property type="entry name" value="PROTEIN-L-HISTIDINE N-PROS-METHYLTRANSFERASE"/>
    <property type="match status" value="1"/>
</dbReference>
<dbReference type="Pfam" id="PF05219">
    <property type="entry name" value="DREV"/>
    <property type="match status" value="1"/>
</dbReference>
<dbReference type="SUPFAM" id="SSF53335">
    <property type="entry name" value="S-adenosyl-L-methionine-dependent methyltransferases"/>
    <property type="match status" value="1"/>
</dbReference>